<feature type="chain" id="PRO_0000175245" description="Delta-sarcoglycan">
    <location>
        <begin position="1"/>
        <end position="289"/>
    </location>
</feature>
<feature type="topological domain" description="Cytoplasmic" evidence="2">
    <location>
        <begin position="1"/>
        <end position="35"/>
    </location>
</feature>
<feature type="transmembrane region" description="Helical; Signal-anchor for type II membrane protein" evidence="2">
    <location>
        <begin position="36"/>
        <end position="56"/>
    </location>
</feature>
<feature type="topological domain" description="Extracellular" evidence="2">
    <location>
        <begin position="57"/>
        <end position="289"/>
    </location>
</feature>
<feature type="glycosylation site" description="N-linked (GlcNAc...) asparagine" evidence="2">
    <location>
        <position position="60"/>
    </location>
</feature>
<feature type="glycosylation site" description="N-linked (GlcNAc...) asparagine" evidence="2">
    <location>
        <position position="108"/>
    </location>
</feature>
<feature type="glycosylation site" description="N-linked (GlcNAc...) asparagine" evidence="2">
    <location>
        <position position="284"/>
    </location>
</feature>
<feature type="disulfide bond" evidence="2">
    <location>
        <begin position="263"/>
        <end position="288"/>
    </location>
</feature>
<feature type="disulfide bond" evidence="2">
    <location>
        <begin position="265"/>
        <end position="281"/>
    </location>
</feature>
<feature type="splice variant" id="VSP_039245" description="In isoform 2 and isoform 3." evidence="6 7 8 9">
    <original>M</original>
    <variation>MM</variation>
    <location>
        <position position="1"/>
    </location>
</feature>
<feature type="splice variant" id="VSP_039246" description="In isoform 3." evidence="9">
    <original>IKLDAAKIRLPRLPHGSYTPTGT</original>
    <variation>VRDEKDRSSKSYSFNRPTLPITG</variation>
    <location>
        <begin position="233"/>
        <end position="255"/>
    </location>
</feature>
<feature type="splice variant" id="VSP_039247" description="In isoform 3." evidence="9">
    <location>
        <begin position="256"/>
        <end position="289"/>
    </location>
</feature>
<feature type="sequence variant" id="VAR_010429" description="In dbSNP:rs45559835." evidence="4">
    <original>R</original>
    <variation>Q</variation>
    <location>
        <position position="96"/>
    </location>
</feature>
<feature type="sequence variant" id="VAR_013181" description="In CMD1L; dbSNP:rs121909298." evidence="3">
    <original>S</original>
    <variation>A</variation>
    <location>
        <position position="150"/>
    </location>
</feature>
<feature type="sequence variant" id="VAR_010396" description="In LGMDR6; dbSNP:rs121909297." evidence="5">
    <original>E</original>
    <variation>K</variation>
    <location>
        <position position="261"/>
    </location>
</feature>
<accession>Q92629</accession>
<accession>A8K9S9</accession>
<accession>Q53XA5</accession>
<accession>Q99644</accession>
<reference key="1">
    <citation type="journal article" date="1996" name="Hum. Mol. Genet.">
        <title>Identification of a novel sarcoglycan gene at 5q33 encoding a sarcolemmal 35kDa glycoprotein.</title>
        <authorList>
            <person name="Nigro V."/>
            <person name="Piluso G."/>
            <person name="Belsito A."/>
            <person name="Politano L."/>
            <person name="Puca A.A."/>
            <person name="Papparella S."/>
            <person name="Rossi E."/>
            <person name="Viglietto G."/>
            <person name="Esposito M.G."/>
            <person name="Abbondanza C."/>
            <person name="Medici N."/>
            <person name="Molinari A.M."/>
            <person name="Nigro G."/>
            <person name="Puca G.A."/>
        </authorList>
    </citation>
    <scope>NUCLEOTIDE SEQUENCE [MRNA] (ISOFORM 2)</scope>
    <scope>VARIANT GLN-96</scope>
    <source>
        <tissue>Skeletal muscle</tissue>
    </source>
</reference>
<reference key="2">
    <citation type="journal article" date="1996" name="J. Biol. Chem.">
        <title>Characterization of delta-sarcoglycan, a novel component of the oligomeric sarcoglycan complex involved in limb-girdle muscular dystrophy.</title>
        <authorList>
            <person name="Jung D."/>
            <person name="Duclos F."/>
            <person name="Apostol B."/>
            <person name="Straub V."/>
            <person name="Lee J.C."/>
            <person name="Allamand V."/>
            <person name="Venzke D.P."/>
            <person name="Sunada Y."/>
            <person name="Moomaw C.R."/>
            <person name="Leveille C.J."/>
            <person name="Slaughter C.A."/>
            <person name="Crawford T.O."/>
            <person name="McPherson J.D."/>
            <person name="Campbell K.P."/>
        </authorList>
    </citation>
    <scope>NUCLEOTIDE SEQUENCE [MRNA] (ISOFORM 3)</scope>
    <source>
        <tissue>Placenta</tissue>
    </source>
</reference>
<reference key="3">
    <citation type="journal article" date="2004" name="Nat. Genet.">
        <title>Complete sequencing and characterization of 21,243 full-length human cDNAs.</title>
        <authorList>
            <person name="Ota T."/>
            <person name="Suzuki Y."/>
            <person name="Nishikawa T."/>
            <person name="Otsuki T."/>
            <person name="Sugiyama T."/>
            <person name="Irie R."/>
            <person name="Wakamatsu A."/>
            <person name="Hayashi K."/>
            <person name="Sato H."/>
            <person name="Nagai K."/>
            <person name="Kimura K."/>
            <person name="Makita H."/>
            <person name="Sekine M."/>
            <person name="Obayashi M."/>
            <person name="Nishi T."/>
            <person name="Shibahara T."/>
            <person name="Tanaka T."/>
            <person name="Ishii S."/>
            <person name="Yamamoto J."/>
            <person name="Saito K."/>
            <person name="Kawai Y."/>
            <person name="Isono Y."/>
            <person name="Nakamura Y."/>
            <person name="Nagahari K."/>
            <person name="Murakami K."/>
            <person name="Yasuda T."/>
            <person name="Iwayanagi T."/>
            <person name="Wagatsuma M."/>
            <person name="Shiratori A."/>
            <person name="Sudo H."/>
            <person name="Hosoiri T."/>
            <person name="Kaku Y."/>
            <person name="Kodaira H."/>
            <person name="Kondo H."/>
            <person name="Sugawara M."/>
            <person name="Takahashi M."/>
            <person name="Kanda K."/>
            <person name="Yokoi T."/>
            <person name="Furuya T."/>
            <person name="Kikkawa E."/>
            <person name="Omura Y."/>
            <person name="Abe K."/>
            <person name="Kamihara K."/>
            <person name="Katsuta N."/>
            <person name="Sato K."/>
            <person name="Tanikawa M."/>
            <person name="Yamazaki M."/>
            <person name="Ninomiya K."/>
            <person name="Ishibashi T."/>
            <person name="Yamashita H."/>
            <person name="Murakawa K."/>
            <person name="Fujimori K."/>
            <person name="Tanai H."/>
            <person name="Kimata M."/>
            <person name="Watanabe M."/>
            <person name="Hiraoka S."/>
            <person name="Chiba Y."/>
            <person name="Ishida S."/>
            <person name="Ono Y."/>
            <person name="Takiguchi S."/>
            <person name="Watanabe S."/>
            <person name="Yosida M."/>
            <person name="Hotuta T."/>
            <person name="Kusano J."/>
            <person name="Kanehori K."/>
            <person name="Takahashi-Fujii A."/>
            <person name="Hara H."/>
            <person name="Tanase T.-O."/>
            <person name="Nomura Y."/>
            <person name="Togiya S."/>
            <person name="Komai F."/>
            <person name="Hara R."/>
            <person name="Takeuchi K."/>
            <person name="Arita M."/>
            <person name="Imose N."/>
            <person name="Musashino K."/>
            <person name="Yuuki H."/>
            <person name="Oshima A."/>
            <person name="Sasaki N."/>
            <person name="Aotsuka S."/>
            <person name="Yoshikawa Y."/>
            <person name="Matsunawa H."/>
            <person name="Ichihara T."/>
            <person name="Shiohata N."/>
            <person name="Sano S."/>
            <person name="Moriya S."/>
            <person name="Momiyama H."/>
            <person name="Satoh N."/>
            <person name="Takami S."/>
            <person name="Terashima Y."/>
            <person name="Suzuki O."/>
            <person name="Nakagawa S."/>
            <person name="Senoh A."/>
            <person name="Mizoguchi H."/>
            <person name="Goto Y."/>
            <person name="Shimizu F."/>
            <person name="Wakebe H."/>
            <person name="Hishigaki H."/>
            <person name="Watanabe T."/>
            <person name="Sugiyama A."/>
            <person name="Takemoto M."/>
            <person name="Kawakami B."/>
            <person name="Yamazaki M."/>
            <person name="Watanabe K."/>
            <person name="Kumagai A."/>
            <person name="Itakura S."/>
            <person name="Fukuzumi Y."/>
            <person name="Fujimori Y."/>
            <person name="Komiyama M."/>
            <person name="Tashiro H."/>
            <person name="Tanigami A."/>
            <person name="Fujiwara T."/>
            <person name="Ono T."/>
            <person name="Yamada K."/>
            <person name="Fujii Y."/>
            <person name="Ozaki K."/>
            <person name="Hirao M."/>
            <person name="Ohmori Y."/>
            <person name="Kawabata A."/>
            <person name="Hikiji T."/>
            <person name="Kobatake N."/>
            <person name="Inagaki H."/>
            <person name="Ikema Y."/>
            <person name="Okamoto S."/>
            <person name="Okitani R."/>
            <person name="Kawakami T."/>
            <person name="Noguchi S."/>
            <person name="Itoh T."/>
            <person name="Shigeta K."/>
            <person name="Senba T."/>
            <person name="Matsumura K."/>
            <person name="Nakajima Y."/>
            <person name="Mizuno T."/>
            <person name="Morinaga M."/>
            <person name="Sasaki M."/>
            <person name="Togashi T."/>
            <person name="Oyama M."/>
            <person name="Hata H."/>
            <person name="Watanabe M."/>
            <person name="Komatsu T."/>
            <person name="Mizushima-Sugano J."/>
            <person name="Satoh T."/>
            <person name="Shirai Y."/>
            <person name="Takahashi Y."/>
            <person name="Nakagawa K."/>
            <person name="Okumura K."/>
            <person name="Nagase T."/>
            <person name="Nomura N."/>
            <person name="Kikuchi H."/>
            <person name="Masuho Y."/>
            <person name="Yamashita R."/>
            <person name="Nakai K."/>
            <person name="Yada T."/>
            <person name="Nakamura Y."/>
            <person name="Ohara O."/>
            <person name="Isogai T."/>
            <person name="Sugano S."/>
        </authorList>
    </citation>
    <scope>NUCLEOTIDE SEQUENCE [LARGE SCALE MRNA] (ISOFORM 2)</scope>
    <source>
        <tissue>Trachea</tissue>
    </source>
</reference>
<reference key="4">
    <citation type="journal article" date="2007" name="BMC Genomics">
        <title>The full-ORF clone resource of the German cDNA consortium.</title>
        <authorList>
            <person name="Bechtel S."/>
            <person name="Rosenfelder H."/>
            <person name="Duda A."/>
            <person name="Schmidt C.P."/>
            <person name="Ernst U."/>
            <person name="Wellenreuther R."/>
            <person name="Mehrle A."/>
            <person name="Schuster C."/>
            <person name="Bahr A."/>
            <person name="Bloecker H."/>
            <person name="Heubner D."/>
            <person name="Hoerlein A."/>
            <person name="Michel G."/>
            <person name="Wedler H."/>
            <person name="Koehrer K."/>
            <person name="Ottenwaelder B."/>
            <person name="Poustka A."/>
            <person name="Wiemann S."/>
            <person name="Schupp I."/>
        </authorList>
    </citation>
    <scope>NUCLEOTIDE SEQUENCE [LARGE SCALE MRNA] (ISOFORM 1)</scope>
    <source>
        <tissue>Retina</tissue>
    </source>
</reference>
<reference key="5">
    <citation type="journal article" date="2004" name="Genome Res.">
        <title>The status, quality, and expansion of the NIH full-length cDNA project: the Mammalian Gene Collection (MGC).</title>
        <authorList>
            <consortium name="The MGC Project Team"/>
        </authorList>
    </citation>
    <scope>NUCLEOTIDE SEQUENCE [LARGE SCALE MRNA] (ISOFORM 2)</scope>
    <source>
        <tissue>Lung</tissue>
    </source>
</reference>
<reference key="6">
    <citation type="journal article" date="2014" name="J. Proteomics">
        <title>An enzyme assisted RP-RPLC approach for in-depth analysis of human liver phosphoproteome.</title>
        <authorList>
            <person name="Bian Y."/>
            <person name="Song C."/>
            <person name="Cheng K."/>
            <person name="Dong M."/>
            <person name="Wang F."/>
            <person name="Huang J."/>
            <person name="Sun D."/>
            <person name="Wang L."/>
            <person name="Ye M."/>
            <person name="Zou H."/>
        </authorList>
    </citation>
    <scope>IDENTIFICATION BY MASS SPECTROMETRY [LARGE SCALE ANALYSIS]</scope>
    <source>
        <tissue>Liver</tissue>
    </source>
</reference>
<reference key="7">
    <citation type="journal article" date="1998" name="J. Med. Genet.">
        <title>A first missense mutation in the delta sarcoglycan gene associated with a severe phenotype and frequency of limb-girdle muscular dystrophy type 2F (LGMD2F) in Brazilian sarcoglycanopathies.</title>
        <authorList>
            <person name="Moreira E.S."/>
            <person name="Vainzof M."/>
            <person name="Marie S.K."/>
            <person name="Nigro V."/>
            <person name="Zatz M."/>
            <person name="Passos-Bueno M.R."/>
        </authorList>
    </citation>
    <scope>VARIANT LGMDR6 LYS-261</scope>
</reference>
<reference key="8">
    <citation type="journal article" date="2000" name="J. Clin. Invest.">
        <title>Mutations in the human delta-sarcoglycan gene in familial and sporadic dilated cardiomyopathy.</title>
        <authorList>
            <person name="Tsubata S."/>
            <person name="Bowles K.R."/>
            <person name="Vatta M."/>
            <person name="Zintz C."/>
            <person name="Titus J."/>
            <person name="Muhonen L."/>
            <person name="Bowles N.E."/>
            <person name="Towbin J.A."/>
        </authorList>
    </citation>
    <scope>VARIANT CMD1L ALA-150</scope>
</reference>
<reference key="9">
    <citation type="journal article" date="2000" name="J. Cell Biol.">
        <title>Filamin 2 (FLN2): a muscle-specific sarcoglycan interacting protein.</title>
        <authorList>
            <person name="Thompson T.G."/>
            <person name="Chan Y.-M."/>
            <person name="Hack A.A."/>
            <person name="Brosius M."/>
            <person name="Rajala M."/>
            <person name="Lidov H.G.W."/>
            <person name="McNally E.M."/>
            <person name="Watkins S."/>
            <person name="Kunkel L.M."/>
        </authorList>
    </citation>
    <scope>INTERACTION WITH FLNC</scope>
</reference>
<organism>
    <name type="scientific">Homo sapiens</name>
    <name type="common">Human</name>
    <dbReference type="NCBI Taxonomy" id="9606"/>
    <lineage>
        <taxon>Eukaryota</taxon>
        <taxon>Metazoa</taxon>
        <taxon>Chordata</taxon>
        <taxon>Craniata</taxon>
        <taxon>Vertebrata</taxon>
        <taxon>Euteleostomi</taxon>
        <taxon>Mammalia</taxon>
        <taxon>Eutheria</taxon>
        <taxon>Euarchontoglires</taxon>
        <taxon>Primates</taxon>
        <taxon>Haplorrhini</taxon>
        <taxon>Catarrhini</taxon>
        <taxon>Hominidae</taxon>
        <taxon>Homo</taxon>
    </lineage>
</organism>
<evidence type="ECO:0000250" key="1"/>
<evidence type="ECO:0000255" key="2"/>
<evidence type="ECO:0000269" key="3">
    <source>
    </source>
</evidence>
<evidence type="ECO:0000269" key="4">
    <source>
    </source>
</evidence>
<evidence type="ECO:0000269" key="5">
    <source>
    </source>
</evidence>
<evidence type="ECO:0000303" key="6">
    <source>
    </source>
</evidence>
<evidence type="ECO:0000303" key="7">
    <source>
    </source>
</evidence>
<evidence type="ECO:0000303" key="8">
    <source>
    </source>
</evidence>
<evidence type="ECO:0000303" key="9">
    <source>
    </source>
</evidence>
<evidence type="ECO:0000305" key="10"/>
<proteinExistence type="evidence at protein level"/>
<sequence>MPQEQYTHHRSTMPGSVGPQVYKVGIYGWRKRCLYFFVLLLMILILVNLAMTIWILKVMNFTIDGMGNLRITEKGLKLEGDSEFLQPLYAKEIQSRPGNALYFKSARNVTVNILNDQTKVLTQLITGPKAVEAYGKKFEVKTVSGKLLFSADNNEVVVGAERLRVLGAEGTVFPKSIETPNVRADPFKELRLESPTRSLVMEAPKGVEINAEAGNMEATCRTELRLESKDGEIKLDAAKIRLPRLPHGSYTPTGTRQKVFEICVCANGRLFLSQAGAGSTCQINTSVCL</sequence>
<gene>
    <name type="primary">SGCD</name>
</gene>
<name>SGCD_HUMAN</name>
<protein>
    <recommendedName>
        <fullName>Delta-sarcoglycan</fullName>
        <shortName>Delta-SG</shortName>
    </recommendedName>
    <alternativeName>
        <fullName>35 kDa dystrophin-associated glycoprotein</fullName>
        <shortName>35DAG</shortName>
    </alternativeName>
</protein>
<dbReference type="EMBL" id="X95191">
    <property type="protein sequence ID" value="CAA64490.1"/>
    <property type="molecule type" value="mRNA"/>
</dbReference>
<dbReference type="EMBL" id="U58331">
    <property type="protein sequence ID" value="AAC50921.1"/>
    <property type="molecule type" value="mRNA"/>
</dbReference>
<dbReference type="EMBL" id="AK292794">
    <property type="protein sequence ID" value="BAF85483.1"/>
    <property type="molecule type" value="mRNA"/>
</dbReference>
<dbReference type="EMBL" id="BX537948">
    <property type="protein sequence ID" value="CAD97916.1"/>
    <property type="molecule type" value="mRNA"/>
</dbReference>
<dbReference type="EMBL" id="BC020740">
    <property type="protein sequence ID" value="AAH20740.1"/>
    <property type="molecule type" value="mRNA"/>
</dbReference>
<dbReference type="CCDS" id="CCDS47325.1">
    <molecule id="Q92629-2"/>
</dbReference>
<dbReference type="CCDS" id="CCDS47326.1">
    <molecule id="Q92629-3"/>
</dbReference>
<dbReference type="CCDS" id="CCDS47327.1">
    <molecule id="Q92629-1"/>
</dbReference>
<dbReference type="RefSeq" id="NP_000328.2">
    <molecule id="Q92629-2"/>
    <property type="nucleotide sequence ID" value="NM_000337.5"/>
</dbReference>
<dbReference type="RefSeq" id="NP_001121681.1">
    <molecule id="Q92629-1"/>
    <property type="nucleotide sequence ID" value="NM_001128209.2"/>
</dbReference>
<dbReference type="RefSeq" id="NP_758447.1">
    <molecule id="Q92629-3"/>
    <property type="nucleotide sequence ID" value="NM_172244.3"/>
</dbReference>
<dbReference type="RefSeq" id="XP_005266023.1">
    <molecule id="Q92629-2"/>
    <property type="nucleotide sequence ID" value="XM_005265966.6"/>
</dbReference>
<dbReference type="RefSeq" id="XP_011532923.1">
    <property type="nucleotide sequence ID" value="XM_011534621.2"/>
</dbReference>
<dbReference type="RefSeq" id="XP_016865212.1">
    <property type="nucleotide sequence ID" value="XM_017009723.1"/>
</dbReference>
<dbReference type="RefSeq" id="XP_016865213.1">
    <molecule id="Q92629-2"/>
    <property type="nucleotide sequence ID" value="XM_017009724.2"/>
</dbReference>
<dbReference type="RefSeq" id="XP_047273474.1">
    <molecule id="Q92629-2"/>
    <property type="nucleotide sequence ID" value="XM_047417518.1"/>
</dbReference>
<dbReference type="RefSeq" id="XP_047273475.1">
    <molecule id="Q92629-2"/>
    <property type="nucleotide sequence ID" value="XM_047417519.1"/>
</dbReference>
<dbReference type="RefSeq" id="XP_047273476.1">
    <molecule id="Q92629-1"/>
    <property type="nucleotide sequence ID" value="XM_047417520.1"/>
</dbReference>
<dbReference type="RefSeq" id="XP_054209102.1">
    <molecule id="Q92629-2"/>
    <property type="nucleotide sequence ID" value="XM_054353127.1"/>
</dbReference>
<dbReference type="RefSeq" id="XP_054209103.1">
    <molecule id="Q92629-2"/>
    <property type="nucleotide sequence ID" value="XM_054353128.1"/>
</dbReference>
<dbReference type="RefSeq" id="XP_054209104.1">
    <molecule id="Q92629-2"/>
    <property type="nucleotide sequence ID" value="XM_054353129.1"/>
</dbReference>
<dbReference type="RefSeq" id="XP_054209105.1">
    <molecule id="Q92629-2"/>
    <property type="nucleotide sequence ID" value="XM_054353130.1"/>
</dbReference>
<dbReference type="RefSeq" id="XP_054209106.1">
    <molecule id="Q92629-1"/>
    <property type="nucleotide sequence ID" value="XM_054353131.1"/>
</dbReference>
<dbReference type="SMR" id="Q92629"/>
<dbReference type="BioGRID" id="112342">
    <property type="interactions" value="67"/>
</dbReference>
<dbReference type="ComplexPortal" id="CPX-2424">
    <property type="entry name" value="Dystrophin glycoprotein complex, skeletal muscle variant"/>
</dbReference>
<dbReference type="ComplexPortal" id="CPX-2443">
    <property type="entry name" value="Dystrophin glycoprotein complex, neuromuscular junction variant"/>
</dbReference>
<dbReference type="ComplexPortal" id="CPX-2454">
    <property type="entry name" value="Dystrophin glycoprotein complex, retinal outer plexiform layer variant"/>
</dbReference>
<dbReference type="ComplexPortal" id="CPX-2455">
    <property type="entry name" value="Dystrophin glycoprotein complex, retinal inner limiting membrane variant"/>
</dbReference>
<dbReference type="CORUM" id="Q92629"/>
<dbReference type="FunCoup" id="Q92629">
    <property type="interactions" value="129"/>
</dbReference>
<dbReference type="IntAct" id="Q92629">
    <property type="interactions" value="13"/>
</dbReference>
<dbReference type="MINT" id="Q92629"/>
<dbReference type="STRING" id="9606.ENSP00000338343"/>
<dbReference type="GlyCosmos" id="Q92629">
    <property type="glycosylation" value="3 sites, No reported glycans"/>
</dbReference>
<dbReference type="GlyGen" id="Q92629">
    <property type="glycosylation" value="3 sites, 10 N-linked glycans (1 site)"/>
</dbReference>
<dbReference type="iPTMnet" id="Q92629"/>
<dbReference type="PhosphoSitePlus" id="Q92629"/>
<dbReference type="SwissPalm" id="Q92629"/>
<dbReference type="BioMuta" id="SGCD"/>
<dbReference type="DMDM" id="212276471"/>
<dbReference type="jPOST" id="Q92629"/>
<dbReference type="MassIVE" id="Q92629"/>
<dbReference type="PaxDb" id="9606-ENSP00000338343"/>
<dbReference type="PeptideAtlas" id="Q92629"/>
<dbReference type="ProteomicsDB" id="75384">
    <molecule id="Q92629-1"/>
</dbReference>
<dbReference type="ProteomicsDB" id="75385">
    <molecule id="Q92629-2"/>
</dbReference>
<dbReference type="ProteomicsDB" id="75386">
    <molecule id="Q92629-3"/>
</dbReference>
<dbReference type="Antibodypedia" id="8150">
    <property type="antibodies" value="294 antibodies from 33 providers"/>
</dbReference>
<dbReference type="DNASU" id="6444"/>
<dbReference type="Ensembl" id="ENST00000337851.9">
    <molecule id="Q92629-2"/>
    <property type="protein sequence ID" value="ENSP00000338343.4"/>
    <property type="gene ID" value="ENSG00000170624.14"/>
</dbReference>
<dbReference type="Ensembl" id="ENST00000435422.7">
    <molecule id="Q92629-1"/>
    <property type="protein sequence ID" value="ENSP00000403003.2"/>
    <property type="gene ID" value="ENSG00000170624.14"/>
</dbReference>
<dbReference type="Ensembl" id="ENST00000517913.5">
    <molecule id="Q92629-3"/>
    <property type="protein sequence ID" value="ENSP00000429378.1"/>
    <property type="gene ID" value="ENSG00000170624.14"/>
</dbReference>
<dbReference type="GeneID" id="6444"/>
<dbReference type="KEGG" id="hsa:6444"/>
<dbReference type="MANE-Select" id="ENST00000337851.9">
    <molecule id="Q92629-2"/>
    <property type="protein sequence ID" value="ENSP00000338343.4"/>
    <property type="RefSeq nucleotide sequence ID" value="NM_000337.6"/>
    <property type="RefSeq protein sequence ID" value="NP_000328.2"/>
</dbReference>
<dbReference type="UCSC" id="uc003lwc.5">
    <molecule id="Q92629-1"/>
    <property type="organism name" value="human"/>
</dbReference>
<dbReference type="AGR" id="HGNC:10807"/>
<dbReference type="CTD" id="6444"/>
<dbReference type="DisGeNET" id="6444"/>
<dbReference type="GeneCards" id="SGCD"/>
<dbReference type="GeneReviews" id="SGCD"/>
<dbReference type="HGNC" id="HGNC:10807">
    <property type="gene designation" value="SGCD"/>
</dbReference>
<dbReference type="HPA" id="ENSG00000170624">
    <property type="expression patterns" value="Tissue enhanced (heart muscle, skeletal muscle, tongue)"/>
</dbReference>
<dbReference type="MalaCards" id="SGCD"/>
<dbReference type="MIM" id="601287">
    <property type="type" value="phenotype"/>
</dbReference>
<dbReference type="MIM" id="601411">
    <property type="type" value="gene"/>
</dbReference>
<dbReference type="MIM" id="606685">
    <property type="type" value="phenotype"/>
</dbReference>
<dbReference type="neXtProt" id="NX_Q92629"/>
<dbReference type="OpenTargets" id="ENSG00000170624"/>
<dbReference type="Orphanet" id="219">
    <property type="disease" value="Delta-sarcoglycan-related limb-girdle muscular dystrophy R6"/>
</dbReference>
<dbReference type="Orphanet" id="154">
    <property type="disease" value="Familial isolated dilated cardiomyopathy"/>
</dbReference>
<dbReference type="PharmGKB" id="PA35718"/>
<dbReference type="VEuPathDB" id="HostDB:ENSG00000170624"/>
<dbReference type="eggNOG" id="KOG3950">
    <property type="taxonomic scope" value="Eukaryota"/>
</dbReference>
<dbReference type="GeneTree" id="ENSGT00940000158509"/>
<dbReference type="HOGENOM" id="CLU_043450_0_0_1"/>
<dbReference type="InParanoid" id="Q92629"/>
<dbReference type="OMA" id="CLYCFIC"/>
<dbReference type="OrthoDB" id="5973998at2759"/>
<dbReference type="PAN-GO" id="Q92629">
    <property type="GO annotations" value="4 GO annotations based on evolutionary models"/>
</dbReference>
<dbReference type="PhylomeDB" id="Q92629"/>
<dbReference type="TreeFam" id="TF313538"/>
<dbReference type="PathwayCommons" id="Q92629"/>
<dbReference type="Reactome" id="R-HSA-9913351">
    <property type="pathway name" value="Formation of the dystrophin-glycoprotein complex (DGC)"/>
</dbReference>
<dbReference type="SignaLink" id="Q92629"/>
<dbReference type="SIGNOR" id="Q92629"/>
<dbReference type="BioGRID-ORCS" id="6444">
    <property type="hits" value="18 hits in 1149 CRISPR screens"/>
</dbReference>
<dbReference type="CD-CODE" id="FB4E32DD">
    <property type="entry name" value="Presynaptic clusters and postsynaptic densities"/>
</dbReference>
<dbReference type="ChiTaRS" id="SGCD">
    <property type="organism name" value="human"/>
</dbReference>
<dbReference type="GeneWiki" id="Delta-sarcoglycan"/>
<dbReference type="GeneWiki" id="SGCD"/>
<dbReference type="GenomeRNAi" id="6444"/>
<dbReference type="Pharos" id="Q92629">
    <property type="development level" value="Tbio"/>
</dbReference>
<dbReference type="PRO" id="PR:Q92629"/>
<dbReference type="Proteomes" id="UP000005640">
    <property type="component" value="Chromosome 5"/>
</dbReference>
<dbReference type="RNAct" id="Q92629">
    <property type="molecule type" value="protein"/>
</dbReference>
<dbReference type="Bgee" id="ENSG00000170624">
    <property type="expression patterns" value="Expressed in left ventricle myocardium and 181 other cell types or tissues"/>
</dbReference>
<dbReference type="ExpressionAtlas" id="Q92629">
    <property type="expression patterns" value="baseline and differential"/>
</dbReference>
<dbReference type="GO" id="GO:0005856">
    <property type="term" value="C:cytoskeleton"/>
    <property type="evidence" value="ECO:0007669"/>
    <property type="project" value="UniProtKB-SubCell"/>
</dbReference>
<dbReference type="GO" id="GO:0016010">
    <property type="term" value="C:dystrophin-associated glycoprotein complex"/>
    <property type="evidence" value="ECO:0000314"/>
    <property type="project" value="UniProtKB"/>
</dbReference>
<dbReference type="GO" id="GO:0005789">
    <property type="term" value="C:endoplasmic reticulum membrane"/>
    <property type="evidence" value="ECO:0000304"/>
    <property type="project" value="Reactome"/>
</dbReference>
<dbReference type="GO" id="GO:0000139">
    <property type="term" value="C:Golgi membrane"/>
    <property type="evidence" value="ECO:0000304"/>
    <property type="project" value="Reactome"/>
</dbReference>
<dbReference type="GO" id="GO:0005886">
    <property type="term" value="C:plasma membrane"/>
    <property type="evidence" value="ECO:0000304"/>
    <property type="project" value="Reactome"/>
</dbReference>
<dbReference type="GO" id="GO:0016012">
    <property type="term" value="C:sarcoglycan complex"/>
    <property type="evidence" value="ECO:0000318"/>
    <property type="project" value="GO_Central"/>
</dbReference>
<dbReference type="GO" id="GO:0042383">
    <property type="term" value="C:sarcolemma"/>
    <property type="evidence" value="ECO:0000318"/>
    <property type="project" value="GO_Central"/>
</dbReference>
<dbReference type="GO" id="GO:0016529">
    <property type="term" value="C:sarcoplasmic reticulum"/>
    <property type="evidence" value="ECO:0007669"/>
    <property type="project" value="Ensembl"/>
</dbReference>
<dbReference type="GO" id="GO:0055074">
    <property type="term" value="P:calcium ion homeostasis"/>
    <property type="evidence" value="ECO:0007669"/>
    <property type="project" value="Ensembl"/>
</dbReference>
<dbReference type="GO" id="GO:0019722">
    <property type="term" value="P:calcium-mediated signaling"/>
    <property type="evidence" value="ECO:0007669"/>
    <property type="project" value="Ensembl"/>
</dbReference>
<dbReference type="GO" id="GO:0086003">
    <property type="term" value="P:cardiac muscle cell contraction"/>
    <property type="evidence" value="ECO:0007669"/>
    <property type="project" value="Ensembl"/>
</dbReference>
<dbReference type="GO" id="GO:0055013">
    <property type="term" value="P:cardiac muscle cell development"/>
    <property type="evidence" value="ECO:0007669"/>
    <property type="project" value="Ensembl"/>
</dbReference>
<dbReference type="GO" id="GO:0048738">
    <property type="term" value="P:cardiac muscle tissue development"/>
    <property type="evidence" value="ECO:0000318"/>
    <property type="project" value="GO_Central"/>
</dbReference>
<dbReference type="GO" id="GO:0060977">
    <property type="term" value="P:coronary vasculature morphogenesis"/>
    <property type="evidence" value="ECO:0007669"/>
    <property type="project" value="Ensembl"/>
</dbReference>
<dbReference type="GO" id="GO:0060047">
    <property type="term" value="P:heart contraction"/>
    <property type="evidence" value="ECO:0000318"/>
    <property type="project" value="GO_Central"/>
</dbReference>
<dbReference type="GO" id="GO:0007517">
    <property type="term" value="P:muscle organ development"/>
    <property type="evidence" value="ECO:0000304"/>
    <property type="project" value="ProtInc"/>
</dbReference>
<dbReference type="GO" id="GO:0031503">
    <property type="term" value="P:protein-containing complex localization"/>
    <property type="evidence" value="ECO:0007669"/>
    <property type="project" value="Ensembl"/>
</dbReference>
<dbReference type="InterPro" id="IPR006875">
    <property type="entry name" value="Sarcoglycan"/>
</dbReference>
<dbReference type="InterPro" id="IPR039972">
    <property type="entry name" value="Sarcoglycan_gamma/delta/zeta"/>
</dbReference>
<dbReference type="PANTHER" id="PTHR12939:SF6">
    <property type="entry name" value="DELTA-SARCOGLYCAN"/>
    <property type="match status" value="1"/>
</dbReference>
<dbReference type="PANTHER" id="PTHR12939">
    <property type="entry name" value="SARCOGLYCAN"/>
    <property type="match status" value="1"/>
</dbReference>
<dbReference type="Pfam" id="PF04790">
    <property type="entry name" value="Sarcoglycan_1"/>
    <property type="match status" value="1"/>
</dbReference>
<keyword id="KW-0025">Alternative splicing</keyword>
<keyword id="KW-0122">Cardiomyopathy</keyword>
<keyword id="KW-1003">Cell membrane</keyword>
<keyword id="KW-0963">Cytoplasm</keyword>
<keyword id="KW-0206">Cytoskeleton</keyword>
<keyword id="KW-0225">Disease variant</keyword>
<keyword id="KW-1015">Disulfide bond</keyword>
<keyword id="KW-0325">Glycoprotein</keyword>
<keyword id="KW-0947">Limb-girdle muscular dystrophy</keyword>
<keyword id="KW-0472">Membrane</keyword>
<keyword id="KW-1267">Proteomics identification</keyword>
<keyword id="KW-1185">Reference proteome</keyword>
<keyword id="KW-0735">Signal-anchor</keyword>
<keyword id="KW-0812">Transmembrane</keyword>
<keyword id="KW-1133">Transmembrane helix</keyword>
<comment type="function">
    <text>Component of the sarcoglycan complex, a subcomplex of the dystrophin-glycoprotein complex which forms a link between the F-actin cytoskeleton and the extracellular matrix.</text>
</comment>
<comment type="subunit">
    <text evidence="1">Interacts with FLNC and DAG1. Cross-link to form 2 major subcomplexes: one consisting of SGCB, SGCD and SGCG and the other consisting of SGCB and SGCD. The association between SGCB and SGCG is particularly strong while SGCA is loosely associated with the other sarcoglycans (By similarity).</text>
</comment>
<comment type="subcellular location">
    <subcellularLocation>
        <location>Cell membrane</location>
        <location>Sarcolemma</location>
        <topology>Single-pass type II membrane protein</topology>
    </subcellularLocation>
    <subcellularLocation>
        <location>Cytoplasm</location>
        <location>Cytoskeleton</location>
    </subcellularLocation>
</comment>
<comment type="alternative products">
    <event type="alternative splicing"/>
    <isoform>
        <id>Q92629-1</id>
        <name>1</name>
        <sequence type="displayed"/>
    </isoform>
    <isoform>
        <id>Q92629-2</id>
        <name>2</name>
        <sequence type="described" ref="VSP_039245"/>
    </isoform>
    <isoform>
        <id>Q92629-3</id>
        <name>3</name>
        <sequence type="described" ref="VSP_039245 VSP_039246 VSP_039247"/>
    </isoform>
</comment>
<comment type="tissue specificity">
    <text>Most strongly expressed in skeletal and cardiac muscle. Also detected in smooth muscle. Weak expression in brain and lung.</text>
</comment>
<comment type="PTM">
    <text>Glycosylated.</text>
</comment>
<comment type="PTM">
    <text evidence="1">Disulfide bonds are present.</text>
</comment>
<comment type="disease" evidence="5">
    <disease id="DI-00663">
        <name>Muscular dystrophy, limb-girdle, autosomal recessive 6</name>
        <acronym>LGMDR6</acronym>
        <description>An autosomal recessive degenerative myopathy initially affecting the proximal limb girdle musculature. Muscle from patients shows a complete loss of delta-sarcoglycan as well as of the others components of the sarcoglycan complex.</description>
        <dbReference type="MIM" id="601287"/>
    </disease>
    <text>The disease is caused by variants affecting the gene represented in this entry.</text>
</comment>
<comment type="disease" evidence="3">
    <disease id="DI-00218">
        <name>Cardiomyopathy, dilated, 1L</name>
        <acronym>CMD1L</acronym>
        <description>A disorder characterized by ventricular dilation and impaired systolic function, resulting in congestive heart failure and arrhythmia. Patients are at risk of premature death.</description>
        <dbReference type="MIM" id="606685"/>
    </disease>
    <text>The disease is caused by variants affecting the gene represented in this entry.</text>
</comment>
<comment type="similarity">
    <text evidence="10">Belongs to the sarcoglycan beta/delta/gamma/zeta family.</text>
</comment>
<comment type="online information" name="Leiden Muscular Dystrophy pages">
    <link uri="https://www.dmd.nl/sgcd_home.html"/>
    <text>SGCD mutations in LGMD2F/CMD1L</text>
</comment>